<evidence type="ECO:0000255" key="1">
    <source>
        <dbReference type="HAMAP-Rule" id="MF_01336"/>
    </source>
</evidence>
<evidence type="ECO:0000305" key="2"/>
<feature type="chain" id="PRO_1000052966" description="Large ribosomal subunit protein bL25">
    <location>
        <begin position="1"/>
        <end position="95"/>
    </location>
</feature>
<protein>
    <recommendedName>
        <fullName evidence="1">Large ribosomal subunit protein bL25</fullName>
    </recommendedName>
    <alternativeName>
        <fullName evidence="2">50S ribosomal protein L25</fullName>
    </alternativeName>
</protein>
<gene>
    <name evidence="1" type="primary">rplY</name>
    <name type="ordered locus">Shew_1830</name>
</gene>
<keyword id="KW-1185">Reference proteome</keyword>
<keyword id="KW-0687">Ribonucleoprotein</keyword>
<keyword id="KW-0689">Ribosomal protein</keyword>
<keyword id="KW-0694">RNA-binding</keyword>
<keyword id="KW-0699">rRNA-binding</keyword>
<proteinExistence type="inferred from homology"/>
<accession>A3QDZ8</accession>
<sequence length="95" mass="10766">MSYTITAQTRTEIGKGSSRRLRHAGKVPAVIYGAGKEAVSIEFEHRSIINIQTNDDFYNSDITIVLDGKEVKVRVQAMQRHAFKPMIEHVDFKFA</sequence>
<name>RL25_SHELP</name>
<reference key="1">
    <citation type="submission" date="2007-03" db="EMBL/GenBank/DDBJ databases">
        <title>Complete sequence of Shewanella loihica PV-4.</title>
        <authorList>
            <consortium name="US DOE Joint Genome Institute"/>
            <person name="Copeland A."/>
            <person name="Lucas S."/>
            <person name="Lapidus A."/>
            <person name="Barry K."/>
            <person name="Detter J.C."/>
            <person name="Glavina del Rio T."/>
            <person name="Hammon N."/>
            <person name="Israni S."/>
            <person name="Dalin E."/>
            <person name="Tice H."/>
            <person name="Pitluck S."/>
            <person name="Chain P."/>
            <person name="Malfatti S."/>
            <person name="Shin M."/>
            <person name="Vergez L."/>
            <person name="Schmutz J."/>
            <person name="Larimer F."/>
            <person name="Land M."/>
            <person name="Hauser L."/>
            <person name="Kyrpides N."/>
            <person name="Mikhailova N."/>
            <person name="Romine M.F."/>
            <person name="Serres G."/>
            <person name="Fredrickson J."/>
            <person name="Tiedje J."/>
            <person name="Richardson P."/>
        </authorList>
    </citation>
    <scope>NUCLEOTIDE SEQUENCE [LARGE SCALE GENOMIC DNA]</scope>
    <source>
        <strain>ATCC BAA-1088 / PV-4</strain>
    </source>
</reference>
<organism>
    <name type="scientific">Shewanella loihica (strain ATCC BAA-1088 / PV-4)</name>
    <dbReference type="NCBI Taxonomy" id="323850"/>
    <lineage>
        <taxon>Bacteria</taxon>
        <taxon>Pseudomonadati</taxon>
        <taxon>Pseudomonadota</taxon>
        <taxon>Gammaproteobacteria</taxon>
        <taxon>Alteromonadales</taxon>
        <taxon>Shewanellaceae</taxon>
        <taxon>Shewanella</taxon>
    </lineage>
</organism>
<comment type="function">
    <text evidence="1">This is one of the proteins that binds to the 5S RNA in the ribosome where it forms part of the central protuberance.</text>
</comment>
<comment type="subunit">
    <text evidence="1">Part of the 50S ribosomal subunit; part of the 5S rRNA/L5/L18/L25 subcomplex. Contacts the 5S rRNA. Binds to the 5S rRNA independently of L5 and L18.</text>
</comment>
<comment type="similarity">
    <text evidence="1">Belongs to the bacterial ribosomal protein bL25 family.</text>
</comment>
<dbReference type="EMBL" id="CP000606">
    <property type="protein sequence ID" value="ABO23696.1"/>
    <property type="molecule type" value="Genomic_DNA"/>
</dbReference>
<dbReference type="RefSeq" id="WP_011865628.1">
    <property type="nucleotide sequence ID" value="NC_009092.1"/>
</dbReference>
<dbReference type="SMR" id="A3QDZ8"/>
<dbReference type="STRING" id="323850.Shew_1830"/>
<dbReference type="KEGG" id="slo:Shew_1830"/>
<dbReference type="eggNOG" id="COG1825">
    <property type="taxonomic scope" value="Bacteria"/>
</dbReference>
<dbReference type="HOGENOM" id="CLU_137946_0_0_6"/>
<dbReference type="OrthoDB" id="9806411at2"/>
<dbReference type="Proteomes" id="UP000001558">
    <property type="component" value="Chromosome"/>
</dbReference>
<dbReference type="GO" id="GO:0022625">
    <property type="term" value="C:cytosolic large ribosomal subunit"/>
    <property type="evidence" value="ECO:0007669"/>
    <property type="project" value="TreeGrafter"/>
</dbReference>
<dbReference type="GO" id="GO:0008097">
    <property type="term" value="F:5S rRNA binding"/>
    <property type="evidence" value="ECO:0007669"/>
    <property type="project" value="InterPro"/>
</dbReference>
<dbReference type="GO" id="GO:0003735">
    <property type="term" value="F:structural constituent of ribosome"/>
    <property type="evidence" value="ECO:0007669"/>
    <property type="project" value="InterPro"/>
</dbReference>
<dbReference type="GO" id="GO:0006412">
    <property type="term" value="P:translation"/>
    <property type="evidence" value="ECO:0007669"/>
    <property type="project" value="UniProtKB-UniRule"/>
</dbReference>
<dbReference type="CDD" id="cd00495">
    <property type="entry name" value="Ribosomal_L25_TL5_CTC"/>
    <property type="match status" value="1"/>
</dbReference>
<dbReference type="FunFam" id="2.40.240.10:FF:000002">
    <property type="entry name" value="50S ribosomal protein L25"/>
    <property type="match status" value="1"/>
</dbReference>
<dbReference type="Gene3D" id="2.40.240.10">
    <property type="entry name" value="Ribosomal Protein L25, Chain P"/>
    <property type="match status" value="1"/>
</dbReference>
<dbReference type="HAMAP" id="MF_01336">
    <property type="entry name" value="Ribosomal_bL25"/>
    <property type="match status" value="1"/>
</dbReference>
<dbReference type="InterPro" id="IPR020056">
    <property type="entry name" value="Rbsml_bL25/Gln-tRNA_synth_N"/>
</dbReference>
<dbReference type="InterPro" id="IPR011035">
    <property type="entry name" value="Ribosomal_bL25/Gln-tRNA_synth"/>
</dbReference>
<dbReference type="InterPro" id="IPR020055">
    <property type="entry name" value="Ribosomal_bL25_short"/>
</dbReference>
<dbReference type="InterPro" id="IPR029751">
    <property type="entry name" value="Ribosomal_L25_dom"/>
</dbReference>
<dbReference type="InterPro" id="IPR020930">
    <property type="entry name" value="Ribosomal_uL5_bac-type"/>
</dbReference>
<dbReference type="NCBIfam" id="NF004612">
    <property type="entry name" value="PRK05943.1"/>
    <property type="match status" value="1"/>
</dbReference>
<dbReference type="PANTHER" id="PTHR33284">
    <property type="entry name" value="RIBOSOMAL PROTEIN L25/GLN-TRNA SYNTHETASE, ANTI-CODON-BINDING DOMAIN-CONTAINING PROTEIN"/>
    <property type="match status" value="1"/>
</dbReference>
<dbReference type="PANTHER" id="PTHR33284:SF1">
    <property type="entry name" value="RIBOSOMAL PROTEIN L25_GLN-TRNA SYNTHETASE, ANTI-CODON-BINDING DOMAIN-CONTAINING PROTEIN"/>
    <property type="match status" value="1"/>
</dbReference>
<dbReference type="Pfam" id="PF01386">
    <property type="entry name" value="Ribosomal_L25p"/>
    <property type="match status" value="1"/>
</dbReference>
<dbReference type="SUPFAM" id="SSF50715">
    <property type="entry name" value="Ribosomal protein L25-like"/>
    <property type="match status" value="1"/>
</dbReference>